<name>PYRB_EHRRW</name>
<sequence length="306" mass="34496">MNMLLEINDLNSYDIEFIFDTAIQHFNNSNVSNNSLYGKTIVNLFFESSTRTLSSFEISAKSLGAHTVTINVSTSSMNKGESIIDTVLNINAMNPDLIIIRSQYSQFIKEISKYLPNCHIINAGDGHHEHPTQALIDYCTIRYIKGKIHNLNISICGDILHSRVARSNIRLLSRYGANISIVAPPTLICNLKGVSHIHHNFVEGISDSDVIMLLRLQKERMTNFTISSEEEYAYLYMLNYENLSYARSDVIVMHPGPTNKGVEISHYVAEKKSIILLQVKMGVAVRKAILEYLLCHKLVKDMGNIT</sequence>
<feature type="chain" id="PRO_0000113132" description="Aspartate carbamoyltransferase catalytic subunit">
    <location>
        <begin position="1"/>
        <end position="306"/>
    </location>
</feature>
<feature type="binding site" evidence="1">
    <location>
        <position position="51"/>
    </location>
    <ligand>
        <name>carbamoyl phosphate</name>
        <dbReference type="ChEBI" id="CHEBI:58228"/>
    </ligand>
</feature>
<feature type="binding site" evidence="1">
    <location>
        <position position="52"/>
    </location>
    <ligand>
        <name>carbamoyl phosphate</name>
        <dbReference type="ChEBI" id="CHEBI:58228"/>
    </ligand>
</feature>
<feature type="binding site" evidence="1">
    <location>
        <position position="79"/>
    </location>
    <ligand>
        <name>L-aspartate</name>
        <dbReference type="ChEBI" id="CHEBI:29991"/>
    </ligand>
</feature>
<feature type="binding site" evidence="1">
    <location>
        <position position="101"/>
    </location>
    <ligand>
        <name>carbamoyl phosphate</name>
        <dbReference type="ChEBI" id="CHEBI:58228"/>
    </ligand>
</feature>
<feature type="binding site" evidence="1">
    <location>
        <position position="130"/>
    </location>
    <ligand>
        <name>carbamoyl phosphate</name>
        <dbReference type="ChEBI" id="CHEBI:58228"/>
    </ligand>
</feature>
<feature type="binding site" evidence="1">
    <location>
        <position position="133"/>
    </location>
    <ligand>
        <name>carbamoyl phosphate</name>
        <dbReference type="ChEBI" id="CHEBI:58228"/>
    </ligand>
</feature>
<feature type="binding site" evidence="1">
    <location>
        <position position="163"/>
    </location>
    <ligand>
        <name>L-aspartate</name>
        <dbReference type="ChEBI" id="CHEBI:29991"/>
    </ligand>
</feature>
<feature type="binding site" evidence="1">
    <location>
        <position position="215"/>
    </location>
    <ligand>
        <name>L-aspartate</name>
        <dbReference type="ChEBI" id="CHEBI:29991"/>
    </ligand>
</feature>
<feature type="binding site" evidence="1">
    <location>
        <position position="256"/>
    </location>
    <ligand>
        <name>carbamoyl phosphate</name>
        <dbReference type="ChEBI" id="CHEBI:58228"/>
    </ligand>
</feature>
<feature type="binding site" evidence="1">
    <location>
        <position position="257"/>
    </location>
    <ligand>
        <name>carbamoyl phosphate</name>
        <dbReference type="ChEBI" id="CHEBI:58228"/>
    </ligand>
</feature>
<accession>Q5HBA3</accession>
<accession>Q5FEW1</accession>
<keyword id="KW-0665">Pyrimidine biosynthesis</keyword>
<keyword id="KW-0808">Transferase</keyword>
<organism>
    <name type="scientific">Ehrlichia ruminantium (strain Welgevonden)</name>
    <dbReference type="NCBI Taxonomy" id="254945"/>
    <lineage>
        <taxon>Bacteria</taxon>
        <taxon>Pseudomonadati</taxon>
        <taxon>Pseudomonadota</taxon>
        <taxon>Alphaproteobacteria</taxon>
        <taxon>Rickettsiales</taxon>
        <taxon>Anaplasmataceae</taxon>
        <taxon>Ehrlichia</taxon>
    </lineage>
</organism>
<comment type="function">
    <text evidence="1">Catalyzes the condensation of carbamoyl phosphate and aspartate to form carbamoyl aspartate and inorganic phosphate, the committed step in the de novo pyrimidine nucleotide biosynthesis pathway.</text>
</comment>
<comment type="catalytic activity">
    <reaction evidence="1">
        <text>carbamoyl phosphate + L-aspartate = N-carbamoyl-L-aspartate + phosphate + H(+)</text>
        <dbReference type="Rhea" id="RHEA:20013"/>
        <dbReference type="ChEBI" id="CHEBI:15378"/>
        <dbReference type="ChEBI" id="CHEBI:29991"/>
        <dbReference type="ChEBI" id="CHEBI:32814"/>
        <dbReference type="ChEBI" id="CHEBI:43474"/>
        <dbReference type="ChEBI" id="CHEBI:58228"/>
        <dbReference type="EC" id="2.1.3.2"/>
    </reaction>
</comment>
<comment type="pathway">
    <text evidence="1">Pyrimidine metabolism; UMP biosynthesis via de novo pathway; (S)-dihydroorotate from bicarbonate: step 2/3.</text>
</comment>
<comment type="subunit">
    <text evidence="1">Heterododecamer (2C3:3R2) of six catalytic PyrB chains organized as two trimers (C3), and six regulatory PyrI chains organized as three dimers (R2).</text>
</comment>
<comment type="similarity">
    <text evidence="1">Belongs to the aspartate/ornithine carbamoyltransferase superfamily. ATCase family.</text>
</comment>
<proteinExistence type="inferred from homology"/>
<evidence type="ECO:0000255" key="1">
    <source>
        <dbReference type="HAMAP-Rule" id="MF_00001"/>
    </source>
</evidence>
<gene>
    <name evidence="1" type="primary">pyrB</name>
    <name type="ordered locus">Erum4250</name>
    <name type="ordered locus">ERWE_CDS_04420</name>
</gene>
<reference key="1">
    <citation type="journal article" date="2005" name="Proc. Natl. Acad. Sci. U.S.A.">
        <title>The genome of the heartwater agent Ehrlichia ruminantium contains multiple tandem repeats of actively variable copy number.</title>
        <authorList>
            <person name="Collins N.E."/>
            <person name="Liebenberg J."/>
            <person name="de Villiers E.P."/>
            <person name="Brayton K.A."/>
            <person name="Louw E."/>
            <person name="Pretorius A."/>
            <person name="Faber F.E."/>
            <person name="van Heerden H."/>
            <person name="Josemans A."/>
            <person name="van Kleef M."/>
            <person name="Steyn H.C."/>
            <person name="van Strijp M.F."/>
            <person name="Zweygarth E."/>
            <person name="Jongejan F."/>
            <person name="Maillard J.C."/>
            <person name="Berthier D."/>
            <person name="Botha M."/>
            <person name="Joubert F."/>
            <person name="Corton C.H."/>
            <person name="Thomson N.R."/>
            <person name="Allsopp M.T."/>
            <person name="Allsopp B.A."/>
        </authorList>
    </citation>
    <scope>NUCLEOTIDE SEQUENCE [LARGE SCALE GENOMIC DNA]</scope>
    <source>
        <strain>Welgevonden</strain>
    </source>
</reference>
<reference key="2">
    <citation type="journal article" date="2006" name="J. Bacteriol.">
        <title>Comparative genomic analysis of three strains of Ehrlichia ruminantium reveals an active process of genome size plasticity.</title>
        <authorList>
            <person name="Frutos R."/>
            <person name="Viari A."/>
            <person name="Ferraz C."/>
            <person name="Morgat A."/>
            <person name="Eychenie S."/>
            <person name="Kandassamy Y."/>
            <person name="Chantal I."/>
            <person name="Bensaid A."/>
            <person name="Coissac E."/>
            <person name="Vachiery N."/>
            <person name="Demaille J."/>
            <person name="Martinez D."/>
        </authorList>
    </citation>
    <scope>NUCLEOTIDE SEQUENCE [LARGE SCALE GENOMIC DNA]</scope>
    <source>
        <strain>Welgevonden</strain>
    </source>
</reference>
<dbReference type="EC" id="2.1.3.2" evidence="1"/>
<dbReference type="EMBL" id="CR767821">
    <property type="protein sequence ID" value="CAH58150.1"/>
    <property type="molecule type" value="Genomic_DNA"/>
</dbReference>
<dbReference type="EMBL" id="CR925678">
    <property type="protein sequence ID" value="CAI26936.1"/>
    <property type="molecule type" value="Genomic_DNA"/>
</dbReference>
<dbReference type="RefSeq" id="WP_011155108.1">
    <property type="nucleotide sequence ID" value="NC_005295.2"/>
</dbReference>
<dbReference type="SMR" id="Q5HBA3"/>
<dbReference type="GeneID" id="33058026"/>
<dbReference type="KEGG" id="eru:Erum4250"/>
<dbReference type="KEGG" id="erw:ERWE_CDS_04420"/>
<dbReference type="eggNOG" id="COG0540">
    <property type="taxonomic scope" value="Bacteria"/>
</dbReference>
<dbReference type="HOGENOM" id="CLU_043846_2_1_5"/>
<dbReference type="UniPathway" id="UPA00070">
    <property type="reaction ID" value="UER00116"/>
</dbReference>
<dbReference type="Proteomes" id="UP000001021">
    <property type="component" value="Chromosome"/>
</dbReference>
<dbReference type="GO" id="GO:0005829">
    <property type="term" value="C:cytosol"/>
    <property type="evidence" value="ECO:0007669"/>
    <property type="project" value="TreeGrafter"/>
</dbReference>
<dbReference type="GO" id="GO:0016597">
    <property type="term" value="F:amino acid binding"/>
    <property type="evidence" value="ECO:0007669"/>
    <property type="project" value="InterPro"/>
</dbReference>
<dbReference type="GO" id="GO:0004070">
    <property type="term" value="F:aspartate carbamoyltransferase activity"/>
    <property type="evidence" value="ECO:0007669"/>
    <property type="project" value="UniProtKB-UniRule"/>
</dbReference>
<dbReference type="GO" id="GO:0006207">
    <property type="term" value="P:'de novo' pyrimidine nucleobase biosynthetic process"/>
    <property type="evidence" value="ECO:0007669"/>
    <property type="project" value="InterPro"/>
</dbReference>
<dbReference type="GO" id="GO:0044205">
    <property type="term" value="P:'de novo' UMP biosynthetic process"/>
    <property type="evidence" value="ECO:0007669"/>
    <property type="project" value="UniProtKB-UniRule"/>
</dbReference>
<dbReference type="GO" id="GO:0006520">
    <property type="term" value="P:amino acid metabolic process"/>
    <property type="evidence" value="ECO:0007669"/>
    <property type="project" value="InterPro"/>
</dbReference>
<dbReference type="Gene3D" id="3.40.50.1370">
    <property type="entry name" value="Aspartate/ornithine carbamoyltransferase"/>
    <property type="match status" value="2"/>
</dbReference>
<dbReference type="HAMAP" id="MF_00001">
    <property type="entry name" value="Asp_carb_tr"/>
    <property type="match status" value="1"/>
</dbReference>
<dbReference type="InterPro" id="IPR006132">
    <property type="entry name" value="Asp/Orn_carbamoyltranf_P-bd"/>
</dbReference>
<dbReference type="InterPro" id="IPR006130">
    <property type="entry name" value="Asp/Orn_carbamoylTrfase"/>
</dbReference>
<dbReference type="InterPro" id="IPR036901">
    <property type="entry name" value="Asp/Orn_carbamoylTrfase_sf"/>
</dbReference>
<dbReference type="InterPro" id="IPR002082">
    <property type="entry name" value="Asp_carbamoyltransf"/>
</dbReference>
<dbReference type="InterPro" id="IPR006131">
    <property type="entry name" value="Asp_carbamoyltransf_Asp/Orn-bd"/>
</dbReference>
<dbReference type="NCBIfam" id="TIGR00670">
    <property type="entry name" value="asp_carb_tr"/>
    <property type="match status" value="1"/>
</dbReference>
<dbReference type="NCBIfam" id="NF002032">
    <property type="entry name" value="PRK00856.1"/>
    <property type="match status" value="1"/>
</dbReference>
<dbReference type="PANTHER" id="PTHR45753:SF6">
    <property type="entry name" value="ASPARTATE CARBAMOYLTRANSFERASE"/>
    <property type="match status" value="1"/>
</dbReference>
<dbReference type="PANTHER" id="PTHR45753">
    <property type="entry name" value="ORNITHINE CARBAMOYLTRANSFERASE, MITOCHONDRIAL"/>
    <property type="match status" value="1"/>
</dbReference>
<dbReference type="Pfam" id="PF00185">
    <property type="entry name" value="OTCace"/>
    <property type="match status" value="1"/>
</dbReference>
<dbReference type="Pfam" id="PF02729">
    <property type="entry name" value="OTCace_N"/>
    <property type="match status" value="1"/>
</dbReference>
<dbReference type="PRINTS" id="PR00100">
    <property type="entry name" value="AOTCASE"/>
</dbReference>
<dbReference type="PRINTS" id="PR00101">
    <property type="entry name" value="ATCASE"/>
</dbReference>
<dbReference type="SUPFAM" id="SSF53671">
    <property type="entry name" value="Aspartate/ornithine carbamoyltransferase"/>
    <property type="match status" value="1"/>
</dbReference>
<dbReference type="PROSITE" id="PS00097">
    <property type="entry name" value="CARBAMOYLTRANSFERASE"/>
    <property type="match status" value="1"/>
</dbReference>
<protein>
    <recommendedName>
        <fullName evidence="1">Aspartate carbamoyltransferase catalytic subunit</fullName>
        <ecNumber evidence="1">2.1.3.2</ecNumber>
    </recommendedName>
    <alternativeName>
        <fullName evidence="1">Aspartate transcarbamylase</fullName>
        <shortName evidence="1">ATCase</shortName>
    </alternativeName>
</protein>